<name>GCSH_PARP8</name>
<protein>
    <recommendedName>
        <fullName evidence="1">Glycine cleavage system H protein</fullName>
    </recommendedName>
</protein>
<comment type="function">
    <text evidence="1">The glycine cleavage system catalyzes the degradation of glycine. The H protein shuttles the methylamine group of glycine from the P protein to the T protein.</text>
</comment>
<comment type="cofactor">
    <cofactor evidence="1">
        <name>(R)-lipoate</name>
        <dbReference type="ChEBI" id="CHEBI:83088"/>
    </cofactor>
    <text evidence="1">Binds 1 lipoyl cofactor covalently.</text>
</comment>
<comment type="subunit">
    <text evidence="1">The glycine cleavage system is composed of four proteins: P, T, L and H.</text>
</comment>
<comment type="similarity">
    <text evidence="1">Belongs to the GcvH family.</text>
</comment>
<proteinExistence type="inferred from homology"/>
<organism>
    <name type="scientific">Paraburkholderia phymatum (strain DSM 17167 / CIP 108236 / LMG 21445 / STM815)</name>
    <name type="common">Burkholderia phymatum</name>
    <dbReference type="NCBI Taxonomy" id="391038"/>
    <lineage>
        <taxon>Bacteria</taxon>
        <taxon>Pseudomonadati</taxon>
        <taxon>Pseudomonadota</taxon>
        <taxon>Betaproteobacteria</taxon>
        <taxon>Burkholderiales</taxon>
        <taxon>Burkholderiaceae</taxon>
        <taxon>Paraburkholderia</taxon>
    </lineage>
</organism>
<keyword id="KW-0450">Lipoyl</keyword>
<keyword id="KW-1185">Reference proteome</keyword>
<dbReference type="EMBL" id="CP001043">
    <property type="protein sequence ID" value="ACC72174.1"/>
    <property type="molecule type" value="Genomic_DNA"/>
</dbReference>
<dbReference type="RefSeq" id="WP_012402352.1">
    <property type="nucleotide sequence ID" value="NC_010622.1"/>
</dbReference>
<dbReference type="SMR" id="B2JJ72"/>
<dbReference type="STRING" id="391038.Bphy_3004"/>
<dbReference type="KEGG" id="bph:Bphy_3004"/>
<dbReference type="eggNOG" id="COG0509">
    <property type="taxonomic scope" value="Bacteria"/>
</dbReference>
<dbReference type="HOGENOM" id="CLU_097408_2_1_4"/>
<dbReference type="OrthoDB" id="9796712at2"/>
<dbReference type="Proteomes" id="UP000001192">
    <property type="component" value="Chromosome 1"/>
</dbReference>
<dbReference type="GO" id="GO:0005829">
    <property type="term" value="C:cytosol"/>
    <property type="evidence" value="ECO:0007669"/>
    <property type="project" value="TreeGrafter"/>
</dbReference>
<dbReference type="GO" id="GO:0005960">
    <property type="term" value="C:glycine cleavage complex"/>
    <property type="evidence" value="ECO:0007669"/>
    <property type="project" value="InterPro"/>
</dbReference>
<dbReference type="GO" id="GO:0019464">
    <property type="term" value="P:glycine decarboxylation via glycine cleavage system"/>
    <property type="evidence" value="ECO:0007669"/>
    <property type="project" value="UniProtKB-UniRule"/>
</dbReference>
<dbReference type="CDD" id="cd06848">
    <property type="entry name" value="GCS_H"/>
    <property type="match status" value="1"/>
</dbReference>
<dbReference type="Gene3D" id="2.40.50.100">
    <property type="match status" value="1"/>
</dbReference>
<dbReference type="HAMAP" id="MF_00272">
    <property type="entry name" value="GcvH"/>
    <property type="match status" value="1"/>
</dbReference>
<dbReference type="InterPro" id="IPR003016">
    <property type="entry name" value="2-oxoA_DH_lipoyl-BS"/>
</dbReference>
<dbReference type="InterPro" id="IPR000089">
    <property type="entry name" value="Biotin_lipoyl"/>
</dbReference>
<dbReference type="InterPro" id="IPR002930">
    <property type="entry name" value="GCV_H"/>
</dbReference>
<dbReference type="InterPro" id="IPR033753">
    <property type="entry name" value="GCV_H/Fam206"/>
</dbReference>
<dbReference type="InterPro" id="IPR017453">
    <property type="entry name" value="GCV_H_sub"/>
</dbReference>
<dbReference type="InterPro" id="IPR011053">
    <property type="entry name" value="Single_hybrid_motif"/>
</dbReference>
<dbReference type="NCBIfam" id="TIGR00527">
    <property type="entry name" value="gcvH"/>
    <property type="match status" value="1"/>
</dbReference>
<dbReference type="NCBIfam" id="NF002270">
    <property type="entry name" value="PRK01202.1"/>
    <property type="match status" value="1"/>
</dbReference>
<dbReference type="PANTHER" id="PTHR11715">
    <property type="entry name" value="GLYCINE CLEAVAGE SYSTEM H PROTEIN"/>
    <property type="match status" value="1"/>
</dbReference>
<dbReference type="PANTHER" id="PTHR11715:SF3">
    <property type="entry name" value="GLYCINE CLEAVAGE SYSTEM H PROTEIN-RELATED"/>
    <property type="match status" value="1"/>
</dbReference>
<dbReference type="Pfam" id="PF01597">
    <property type="entry name" value="GCV_H"/>
    <property type="match status" value="1"/>
</dbReference>
<dbReference type="SUPFAM" id="SSF51230">
    <property type="entry name" value="Single hybrid motif"/>
    <property type="match status" value="1"/>
</dbReference>
<dbReference type="PROSITE" id="PS50968">
    <property type="entry name" value="BIOTINYL_LIPOYL"/>
    <property type="match status" value="1"/>
</dbReference>
<dbReference type="PROSITE" id="PS00189">
    <property type="entry name" value="LIPOYL"/>
    <property type="match status" value="1"/>
</dbReference>
<accession>B2JJ72</accession>
<sequence>MSIPADLKYTESHEWVRTEADGTLTVGITDHAQEALGDIVFFEVQQLGQTVSAGDTVAVIESVKAASDIYAPVSGEIIEANPNVADTPDAVNSAPYDNWLFKIKPADGASQDRLMDAAAYGKSIGE</sequence>
<reference key="1">
    <citation type="journal article" date="2014" name="Stand. Genomic Sci.">
        <title>Complete genome sequence of Burkholderia phymatum STM815(T), a broad host range and efficient nitrogen-fixing symbiont of Mimosa species.</title>
        <authorList>
            <person name="Moulin L."/>
            <person name="Klonowska A."/>
            <person name="Caroline B."/>
            <person name="Booth K."/>
            <person name="Vriezen J.A."/>
            <person name="Melkonian R."/>
            <person name="James E.K."/>
            <person name="Young J.P."/>
            <person name="Bena G."/>
            <person name="Hauser L."/>
            <person name="Land M."/>
            <person name="Kyrpides N."/>
            <person name="Bruce D."/>
            <person name="Chain P."/>
            <person name="Copeland A."/>
            <person name="Pitluck S."/>
            <person name="Woyke T."/>
            <person name="Lizotte-Waniewski M."/>
            <person name="Bristow J."/>
            <person name="Riley M."/>
        </authorList>
    </citation>
    <scope>NUCLEOTIDE SEQUENCE [LARGE SCALE GENOMIC DNA]</scope>
    <source>
        <strain>DSM 17167 / CIP 108236 / LMG 21445 / STM815</strain>
    </source>
</reference>
<feature type="chain" id="PRO_1000114503" description="Glycine cleavage system H protein">
    <location>
        <begin position="1"/>
        <end position="126"/>
    </location>
</feature>
<feature type="domain" description="Lipoyl-binding" evidence="2">
    <location>
        <begin position="23"/>
        <end position="104"/>
    </location>
</feature>
<feature type="modified residue" description="N6-lipoyllysine" evidence="1">
    <location>
        <position position="64"/>
    </location>
</feature>
<gene>
    <name evidence="1" type="primary">gcvH</name>
    <name type="ordered locus">Bphy_3004</name>
</gene>
<evidence type="ECO:0000255" key="1">
    <source>
        <dbReference type="HAMAP-Rule" id="MF_00272"/>
    </source>
</evidence>
<evidence type="ECO:0000255" key="2">
    <source>
        <dbReference type="PROSITE-ProRule" id="PRU01066"/>
    </source>
</evidence>